<dbReference type="EMBL" id="AB019228">
    <property type="protein sequence ID" value="BAA96906.1"/>
    <property type="molecule type" value="Genomic_DNA"/>
</dbReference>
<dbReference type="EMBL" id="CP002688">
    <property type="protein sequence ID" value="AED97005.1"/>
    <property type="molecule type" value="Genomic_DNA"/>
</dbReference>
<dbReference type="EMBL" id="AY091097">
    <property type="protein sequence ID" value="AAM14048.1"/>
    <property type="molecule type" value="mRNA"/>
</dbReference>
<dbReference type="EMBL" id="AY123035">
    <property type="protein sequence ID" value="AAM67568.1"/>
    <property type="molecule type" value="mRNA"/>
</dbReference>
<dbReference type="EMBL" id="FJ708804">
    <property type="protein sequence ID" value="ACN59395.1"/>
    <property type="molecule type" value="mRNA"/>
</dbReference>
<dbReference type="RefSeq" id="NP_200623.1">
    <property type="nucleotide sequence ID" value="NM_125200.2"/>
</dbReference>
<dbReference type="SMR" id="Q9LVN2"/>
<dbReference type="BioGRID" id="21171">
    <property type="interactions" value="17"/>
</dbReference>
<dbReference type="FunCoup" id="Q9LVN2">
    <property type="interactions" value="12"/>
</dbReference>
<dbReference type="IntAct" id="Q9LVN2">
    <property type="interactions" value="17"/>
</dbReference>
<dbReference type="STRING" id="3702.Q9LVN2"/>
<dbReference type="GlyGen" id="Q9LVN2">
    <property type="glycosylation" value="11 sites"/>
</dbReference>
<dbReference type="iPTMnet" id="Q9LVN2"/>
<dbReference type="PaxDb" id="3702-AT5G58150.1"/>
<dbReference type="ProteomicsDB" id="242935"/>
<dbReference type="EnsemblPlants" id="AT5G58150.1">
    <property type="protein sequence ID" value="AT5G58150.1"/>
    <property type="gene ID" value="AT5G58150"/>
</dbReference>
<dbReference type="GeneID" id="835927"/>
<dbReference type="Gramene" id="AT5G58150.1">
    <property type="protein sequence ID" value="AT5G58150.1"/>
    <property type="gene ID" value="AT5G58150"/>
</dbReference>
<dbReference type="KEGG" id="ath:AT5G58150"/>
<dbReference type="Araport" id="AT5G58150"/>
<dbReference type="TAIR" id="AT5G58150"/>
<dbReference type="eggNOG" id="ENOG502QTEF">
    <property type="taxonomic scope" value="Eukaryota"/>
</dbReference>
<dbReference type="HOGENOM" id="CLU_000288_22_1_1"/>
<dbReference type="InParanoid" id="Q9LVN2"/>
<dbReference type="OMA" id="CTADLPW"/>
<dbReference type="PhylomeDB" id="Q9LVN2"/>
<dbReference type="PRO" id="PR:Q9LVN2"/>
<dbReference type="Proteomes" id="UP000006548">
    <property type="component" value="Chromosome 5"/>
</dbReference>
<dbReference type="ExpressionAtlas" id="Q9LVN2">
    <property type="expression patterns" value="baseline and differential"/>
</dbReference>
<dbReference type="GO" id="GO:0000325">
    <property type="term" value="C:plant-type vacuole"/>
    <property type="evidence" value="ECO:0007005"/>
    <property type="project" value="TAIR"/>
</dbReference>
<dbReference type="GO" id="GO:0005886">
    <property type="term" value="C:plasma membrane"/>
    <property type="evidence" value="ECO:0007005"/>
    <property type="project" value="TAIR"/>
</dbReference>
<dbReference type="GO" id="GO:0005524">
    <property type="term" value="F:ATP binding"/>
    <property type="evidence" value="ECO:0007669"/>
    <property type="project" value="UniProtKB-KW"/>
</dbReference>
<dbReference type="GO" id="GO:0004672">
    <property type="term" value="F:protein kinase activity"/>
    <property type="evidence" value="ECO:0007669"/>
    <property type="project" value="InterPro"/>
</dbReference>
<dbReference type="FunFam" id="3.80.10.10:FF:001678">
    <property type="entry name" value="Calmodulin-binding receptor kinase CaMRLK"/>
    <property type="match status" value="1"/>
</dbReference>
<dbReference type="FunFam" id="3.80.10.10:FF:000041">
    <property type="entry name" value="LRR receptor-like serine/threonine-protein kinase ERECTA"/>
    <property type="match status" value="1"/>
</dbReference>
<dbReference type="FunFam" id="3.30.200.20:FF:000466">
    <property type="entry name" value="Putative LRR receptor-like serine/threonine-protein kinase"/>
    <property type="match status" value="1"/>
</dbReference>
<dbReference type="Gene3D" id="3.30.200.20">
    <property type="entry name" value="Phosphorylase Kinase, domain 1"/>
    <property type="match status" value="1"/>
</dbReference>
<dbReference type="Gene3D" id="3.80.10.10">
    <property type="entry name" value="Ribonuclease Inhibitor"/>
    <property type="match status" value="4"/>
</dbReference>
<dbReference type="Gene3D" id="1.10.510.10">
    <property type="entry name" value="Transferase(Phosphotransferase) domain 1"/>
    <property type="match status" value="1"/>
</dbReference>
<dbReference type="InterPro" id="IPR011009">
    <property type="entry name" value="Kinase-like_dom_sf"/>
</dbReference>
<dbReference type="InterPro" id="IPR001611">
    <property type="entry name" value="Leu-rich_rpt"/>
</dbReference>
<dbReference type="InterPro" id="IPR003591">
    <property type="entry name" value="Leu-rich_rpt_typical-subtyp"/>
</dbReference>
<dbReference type="InterPro" id="IPR032675">
    <property type="entry name" value="LRR_dom_sf"/>
</dbReference>
<dbReference type="InterPro" id="IPR051824">
    <property type="entry name" value="LRR_Rcpt-Like_S/T_Kinase"/>
</dbReference>
<dbReference type="InterPro" id="IPR000719">
    <property type="entry name" value="Prot_kinase_dom"/>
</dbReference>
<dbReference type="InterPro" id="IPR001245">
    <property type="entry name" value="Ser-Thr/Tyr_kinase_cat_dom"/>
</dbReference>
<dbReference type="PANTHER" id="PTHR48006">
    <property type="entry name" value="LEUCINE-RICH REPEAT-CONTAINING PROTEIN DDB_G0281931-RELATED"/>
    <property type="match status" value="1"/>
</dbReference>
<dbReference type="PANTHER" id="PTHR48006:SF14">
    <property type="entry name" value="PROTEIN KINASE DOMAIN-CONTAINING PROTEIN"/>
    <property type="match status" value="1"/>
</dbReference>
<dbReference type="Pfam" id="PF00560">
    <property type="entry name" value="LRR_1"/>
    <property type="match status" value="2"/>
</dbReference>
<dbReference type="Pfam" id="PF13855">
    <property type="entry name" value="LRR_8"/>
    <property type="match status" value="2"/>
</dbReference>
<dbReference type="Pfam" id="PF07714">
    <property type="entry name" value="PK_Tyr_Ser-Thr"/>
    <property type="match status" value="1"/>
</dbReference>
<dbReference type="PRINTS" id="PR00019">
    <property type="entry name" value="LEURICHRPT"/>
</dbReference>
<dbReference type="SMART" id="SM00369">
    <property type="entry name" value="LRR_TYP"/>
    <property type="match status" value="6"/>
</dbReference>
<dbReference type="SUPFAM" id="SSF52058">
    <property type="entry name" value="L domain-like"/>
    <property type="match status" value="1"/>
</dbReference>
<dbReference type="SUPFAM" id="SSF56112">
    <property type="entry name" value="Protein kinase-like (PK-like)"/>
    <property type="match status" value="1"/>
</dbReference>
<dbReference type="PROSITE" id="PS51450">
    <property type="entry name" value="LRR"/>
    <property type="match status" value="11"/>
</dbReference>
<dbReference type="PROSITE" id="PS50011">
    <property type="entry name" value="PROTEIN_KINASE_DOM"/>
    <property type="match status" value="1"/>
</dbReference>
<accession>Q9LVN2</accession>
<feature type="signal peptide" evidence="3">
    <location>
        <begin position="1"/>
        <end position="21"/>
    </location>
</feature>
<feature type="chain" id="PRO_0000389467" description="Probably inactive leucine-rich repeat receptor-like protein kinase At5g58150">
    <location>
        <begin position="22"/>
        <end position="785"/>
    </location>
</feature>
<feature type="topological domain" description="Extracellular" evidence="3">
    <location>
        <begin position="22"/>
        <end position="436"/>
    </location>
</feature>
<feature type="transmembrane region" description="Helical" evidence="3">
    <location>
        <begin position="437"/>
        <end position="457"/>
    </location>
</feature>
<feature type="topological domain" description="Cytoplasmic" evidence="3">
    <location>
        <begin position="458"/>
        <end position="785"/>
    </location>
</feature>
<feature type="repeat" description="LRR 1">
    <location>
        <begin position="64"/>
        <end position="88"/>
    </location>
</feature>
<feature type="repeat" description="LRR 2">
    <location>
        <begin position="89"/>
        <end position="112"/>
    </location>
</feature>
<feature type="repeat" description="LRR 3">
    <location>
        <begin position="114"/>
        <end position="136"/>
    </location>
</feature>
<feature type="repeat" description="LRR 4">
    <location>
        <begin position="138"/>
        <end position="160"/>
    </location>
</feature>
<feature type="repeat" description="LRR 5">
    <location>
        <begin position="161"/>
        <end position="184"/>
    </location>
</feature>
<feature type="repeat" description="LRR 6">
    <location>
        <begin position="186"/>
        <end position="208"/>
    </location>
</feature>
<feature type="repeat" description="LRR 7">
    <location>
        <begin position="210"/>
        <end position="232"/>
    </location>
</feature>
<feature type="repeat" description="LRR 8">
    <location>
        <begin position="236"/>
        <end position="258"/>
    </location>
</feature>
<feature type="repeat" description="LRR 9">
    <location>
        <begin position="259"/>
        <end position="283"/>
    </location>
</feature>
<feature type="repeat" description="LRR 10">
    <location>
        <begin position="284"/>
        <end position="306"/>
    </location>
</feature>
<feature type="repeat" description="LRR 11">
    <location>
        <begin position="307"/>
        <end position="330"/>
    </location>
</feature>
<feature type="repeat" description="LRR 12">
    <location>
        <begin position="331"/>
        <end position="355"/>
    </location>
</feature>
<feature type="repeat" description="LRR 13">
    <location>
        <begin position="357"/>
        <end position="377"/>
    </location>
</feature>
<feature type="repeat" description="LRR 14">
    <location>
        <begin position="379"/>
        <end position="405"/>
    </location>
</feature>
<feature type="domain" description="Protein kinase" evidence="4">
    <location>
        <begin position="521"/>
        <end position="785"/>
    </location>
</feature>
<feature type="binding site" evidence="4">
    <location>
        <begin position="527"/>
        <end position="535"/>
    </location>
    <ligand>
        <name>ATP</name>
        <dbReference type="ChEBI" id="CHEBI:30616"/>
    </ligand>
</feature>
<feature type="binding site" evidence="4">
    <location>
        <position position="549"/>
    </location>
    <ligand>
        <name>ATP</name>
        <dbReference type="ChEBI" id="CHEBI:30616"/>
    </ligand>
</feature>
<feature type="modified residue" description="Phosphothreonine" evidence="2">
    <location>
        <position position="510"/>
    </location>
</feature>
<feature type="modified residue" description="Phosphothreonine" evidence="2">
    <location>
        <position position="518"/>
    </location>
</feature>
<feature type="modified residue" description="Phosphotyrosine" evidence="2">
    <location>
        <position position="594"/>
    </location>
</feature>
<feature type="modified residue" description="Phosphotyrosine" evidence="1">
    <location>
        <position position="683"/>
    </location>
</feature>
<feature type="glycosylation site" description="N-linked (GlcNAc...) asparagine" evidence="3">
    <location>
        <position position="119"/>
    </location>
</feature>
<feature type="glycosylation site" description="N-linked (GlcNAc...) asparagine" evidence="3">
    <location>
        <position position="162"/>
    </location>
</feature>
<feature type="glycosylation site" description="N-linked (GlcNAc...) asparagine" evidence="3">
    <location>
        <position position="198"/>
    </location>
</feature>
<feature type="glycosylation site" description="N-linked (GlcNAc...) asparagine" evidence="3">
    <location>
        <position position="216"/>
    </location>
</feature>
<feature type="glycosylation site" description="N-linked (GlcNAc...) asparagine" evidence="3">
    <location>
        <position position="258"/>
    </location>
</feature>
<feature type="glycosylation site" description="N-linked (GlcNAc...) asparagine" evidence="3">
    <location>
        <position position="314"/>
    </location>
</feature>
<feature type="glycosylation site" description="N-linked (GlcNAc...) asparagine" evidence="3">
    <location>
        <position position="319"/>
    </location>
</feature>
<feature type="glycosylation site" description="N-linked (GlcNAc...) asparagine" evidence="3">
    <location>
        <position position="343"/>
    </location>
</feature>
<feature type="glycosylation site" description="N-linked (GlcNAc...) asparagine" evidence="3">
    <location>
        <position position="385"/>
    </location>
</feature>
<feature type="glycosylation site" description="N-linked (GlcNAc...) asparagine" evidence="3">
    <location>
        <position position="390"/>
    </location>
</feature>
<feature type="glycosylation site" description="N-linked (GlcNAc...) asparagine" evidence="3">
    <location>
        <position position="397"/>
    </location>
</feature>
<comment type="subcellular location">
    <subcellularLocation>
        <location evidence="5">Cell membrane</location>
        <topology evidence="5">Single-pass type I membrane protein</topology>
    </subcellularLocation>
</comment>
<comment type="domain">
    <text>The protein kinase domain is predicted to be catalytically inactive. Lacks the conserved Asp active site at position 645, which is replaced by a Glu residue.</text>
</comment>
<comment type="similarity">
    <text evidence="4">Belongs to the protein kinase superfamily. Ser/Thr protein kinase family.</text>
</comment>
<protein>
    <recommendedName>
        <fullName>Probably inactive leucine-rich repeat receptor-like protein kinase At5g58150</fullName>
    </recommendedName>
</protein>
<keyword id="KW-0067">ATP-binding</keyword>
<keyword id="KW-1003">Cell membrane</keyword>
<keyword id="KW-0325">Glycoprotein</keyword>
<keyword id="KW-0433">Leucine-rich repeat</keyword>
<keyword id="KW-0472">Membrane</keyword>
<keyword id="KW-0547">Nucleotide-binding</keyword>
<keyword id="KW-0597">Phosphoprotein</keyword>
<keyword id="KW-0675">Receptor</keyword>
<keyword id="KW-1185">Reference proteome</keyword>
<keyword id="KW-0677">Repeat</keyword>
<keyword id="KW-0732">Signal</keyword>
<keyword id="KW-0812">Transmembrane</keyword>
<keyword id="KW-1133">Transmembrane helix</keyword>
<reference key="1">
    <citation type="journal article" date="2000" name="DNA Res.">
        <title>Structural analysis of Arabidopsis thaliana chromosome 5. X. Sequence features of the regions of 3,076,755 bp covered by sixty P1 and TAC clones.</title>
        <authorList>
            <person name="Sato S."/>
            <person name="Nakamura Y."/>
            <person name="Kaneko T."/>
            <person name="Katoh T."/>
            <person name="Asamizu E."/>
            <person name="Kotani H."/>
            <person name="Tabata S."/>
        </authorList>
    </citation>
    <scope>NUCLEOTIDE SEQUENCE [LARGE SCALE GENOMIC DNA]</scope>
    <source>
        <strain>cv. Columbia</strain>
    </source>
</reference>
<reference key="2">
    <citation type="journal article" date="2017" name="Plant J.">
        <title>Araport11: a complete reannotation of the Arabidopsis thaliana reference genome.</title>
        <authorList>
            <person name="Cheng C.Y."/>
            <person name="Krishnakumar V."/>
            <person name="Chan A.P."/>
            <person name="Thibaud-Nissen F."/>
            <person name="Schobel S."/>
            <person name="Town C.D."/>
        </authorList>
    </citation>
    <scope>GENOME REANNOTATION</scope>
    <source>
        <strain>cv. Columbia</strain>
    </source>
</reference>
<reference key="3">
    <citation type="journal article" date="2003" name="Science">
        <title>Empirical analysis of transcriptional activity in the Arabidopsis genome.</title>
        <authorList>
            <person name="Yamada K."/>
            <person name="Lim J."/>
            <person name="Dale J.M."/>
            <person name="Chen H."/>
            <person name="Shinn P."/>
            <person name="Palm C.J."/>
            <person name="Southwick A.M."/>
            <person name="Wu H.C."/>
            <person name="Kim C.J."/>
            <person name="Nguyen M."/>
            <person name="Pham P.K."/>
            <person name="Cheuk R.F."/>
            <person name="Karlin-Newmann G."/>
            <person name="Liu S.X."/>
            <person name="Lam B."/>
            <person name="Sakano H."/>
            <person name="Wu T."/>
            <person name="Yu G."/>
            <person name="Miranda M."/>
            <person name="Quach H.L."/>
            <person name="Tripp M."/>
            <person name="Chang C.H."/>
            <person name="Lee J.M."/>
            <person name="Toriumi M.J."/>
            <person name="Chan M.M."/>
            <person name="Tang C.C."/>
            <person name="Onodera C.S."/>
            <person name="Deng J.M."/>
            <person name="Akiyama K."/>
            <person name="Ansari Y."/>
            <person name="Arakawa T."/>
            <person name="Banh J."/>
            <person name="Banno F."/>
            <person name="Bowser L."/>
            <person name="Brooks S.Y."/>
            <person name="Carninci P."/>
            <person name="Chao Q."/>
            <person name="Choy N."/>
            <person name="Enju A."/>
            <person name="Goldsmith A.D."/>
            <person name="Gurjal M."/>
            <person name="Hansen N.F."/>
            <person name="Hayashizaki Y."/>
            <person name="Johnson-Hopson C."/>
            <person name="Hsuan V.W."/>
            <person name="Iida K."/>
            <person name="Karnes M."/>
            <person name="Khan S."/>
            <person name="Koesema E."/>
            <person name="Ishida J."/>
            <person name="Jiang P.X."/>
            <person name="Jones T."/>
            <person name="Kawai J."/>
            <person name="Kamiya A."/>
            <person name="Meyers C."/>
            <person name="Nakajima M."/>
            <person name="Narusaka M."/>
            <person name="Seki M."/>
            <person name="Sakurai T."/>
            <person name="Satou M."/>
            <person name="Tamse R."/>
            <person name="Vaysberg M."/>
            <person name="Wallender E.K."/>
            <person name="Wong C."/>
            <person name="Yamamura Y."/>
            <person name="Yuan S."/>
            <person name="Shinozaki K."/>
            <person name="Davis R.W."/>
            <person name="Theologis A."/>
            <person name="Ecker J.R."/>
        </authorList>
    </citation>
    <scope>NUCLEOTIDE SEQUENCE [LARGE SCALE MRNA]</scope>
    <source>
        <strain>cv. Columbia</strain>
    </source>
</reference>
<reference key="4">
    <citation type="journal article" date="2010" name="BMC Genomics">
        <title>Genome-wide cloning and sequence analysis of leucine-rich repeat receptor-like protein kinase genes in Arabidopsis thaliana.</title>
        <authorList>
            <person name="Gou X."/>
            <person name="He K."/>
            <person name="Yang H."/>
            <person name="Yuan T."/>
            <person name="Lin H."/>
            <person name="Clouse S.D."/>
            <person name="Li J."/>
        </authorList>
    </citation>
    <scope>NUCLEOTIDE SEQUENCE [LARGE SCALE MRNA]</scope>
    <source>
        <strain>cv. Columbia</strain>
    </source>
</reference>
<reference key="5">
    <citation type="journal article" date="2003" name="Mol. Cell. Proteomics">
        <title>Large-scale analysis of in vivo phosphorylated membrane proteins by immobilized metal ion affinity chromatography and mass spectrometry.</title>
        <authorList>
            <person name="Nuehse T.S."/>
            <person name="Stensballe A."/>
            <person name="Jensen O.N."/>
            <person name="Peck S.C."/>
        </authorList>
    </citation>
    <scope>SUBCELLULAR LOCATION</scope>
    <source>
        <strain>cv. La-0</strain>
    </source>
</reference>
<proteinExistence type="evidence at transcript level"/>
<gene>
    <name type="ordered locus">At5g58150</name>
    <name type="ORF">MCK7.2</name>
</gene>
<evidence type="ECO:0000250" key="1">
    <source>
        <dbReference type="UniProtKB" id="C0LGT6"/>
    </source>
</evidence>
<evidence type="ECO:0000250" key="2">
    <source>
        <dbReference type="UniProtKB" id="O22476"/>
    </source>
</evidence>
<evidence type="ECO:0000255" key="3"/>
<evidence type="ECO:0000255" key="4">
    <source>
        <dbReference type="PROSITE-ProRule" id="PRU00159"/>
    </source>
</evidence>
<evidence type="ECO:0000269" key="5">
    <source>
    </source>
</evidence>
<name>Y5815_ARATH</name>
<organism>
    <name type="scientific">Arabidopsis thaliana</name>
    <name type="common">Mouse-ear cress</name>
    <dbReference type="NCBI Taxonomy" id="3702"/>
    <lineage>
        <taxon>Eukaryota</taxon>
        <taxon>Viridiplantae</taxon>
        <taxon>Streptophyta</taxon>
        <taxon>Embryophyta</taxon>
        <taxon>Tracheophyta</taxon>
        <taxon>Spermatophyta</taxon>
        <taxon>Magnoliopsida</taxon>
        <taxon>eudicotyledons</taxon>
        <taxon>Gunneridae</taxon>
        <taxon>Pentapetalae</taxon>
        <taxon>rosids</taxon>
        <taxon>malvids</taxon>
        <taxon>Brassicales</taxon>
        <taxon>Brassicaceae</taxon>
        <taxon>Camelineae</taxon>
        <taxon>Arabidopsis</taxon>
    </lineage>
</organism>
<sequence>MRLSLWGSLLFFSFFVKHLTSLDPNTDAYHLSSFFSAMRLPNSPQAHTFSSLCSWPGVVVCDSSENVLHISASGLDLSGSIPDNTIGKMSKLQTLDLSGNKITSLPSDLWSLSLLESLNLSSNRISEPLPSNIGNFMSLHTLDLSFNSISGKIPAAISNLVNLTTLKLHNNDFQFGVPPELVHCRSLLSIDLSSNRLNESLPVGFGSAFPLLKSLNLSRNLFQGSLIGVLHENVETVDLSENRFDGHILQLIPGHKHNWSSLIHLDLSDNSFVGHIFNGLSSAHKLGHLNLACNRFRAQEFPEIGKLSALHYLNLSRTNLTNIIPREISRLSHLKVLDLSSNNLTGHVPMLSVKNIEVLDLSLNKLDGDIPRPLLEKLAMMQRFNFSFNNLTFCNPNFSQETIQRSFINIRNNCPFAAKPIITKGKKVNKKNTGLKIGLGLAISMAFLLIGLLLILVALRVRRKSRTWATKLAINNTEPNSPDQHDSTTDIKQATQIPVVMIDKPLMKMTLADLKAATFNFDRGTMLWEGKSGPTYGAVLPGGFRAALKVIPSGTTLTDTEVSIAFERLARINHPNLFPLCGYCIATEQRIAIYEDLDMVNLQSLLHNNGDDSAPWRLRHKIALGTARALAFLHHGCIPPMVHGEVKAATILLDSSQEPRLADFGLVKLLDEQFPGSESLDGYTPPEQERNASPTLESDVYSFGVVLLELVSGKKPEGDLVNWVRGLVRQGQGLRAIDPTMQETVPEDEIAEAVKIGYLCTADLPWKRPTMQQVVGLLKDISPNY</sequence>